<protein>
    <recommendedName>
        <fullName evidence="1">3-demethoxyubiquinol 3-hydroxylase</fullName>
        <shortName evidence="1">DMQ hydroxylase</shortName>
        <ecNumber evidence="1">1.14.99.60</ecNumber>
    </recommendedName>
    <alternativeName>
        <fullName evidence="1">2-nonaprenyl-3-methyl-6-methoxy-1,4-benzoquinol hydroxylase</fullName>
    </alternativeName>
</protein>
<sequence>MRKLSFLDRVIEELDSYARFTKVPLNPSKKSPSSDTIDGKLSEIEKKHSAGLMRVDYTGEICAQGLYRGQASVAKSPQTKEHLYHAAAEEYDHLAWCGERLQELGARPSLLNPFWYWTSFGIGAVAGSISDSLSYGFVVETEKQVMKHLDSHLKSLPVNDNRSREILKQMYIDESEHAVEAEKAGGKKLPKTVKAIMKLQSKVMTTLAYRF</sequence>
<accession>B2SH27</accession>
<feature type="chain" id="PRO_1000187052" description="3-demethoxyubiquinol 3-hydroxylase">
    <location>
        <begin position="1"/>
        <end position="211"/>
    </location>
</feature>
<feature type="binding site" evidence="1">
    <location>
        <position position="60"/>
    </location>
    <ligand>
        <name>Fe cation</name>
        <dbReference type="ChEBI" id="CHEBI:24875"/>
        <label>1</label>
    </ligand>
</feature>
<feature type="binding site" evidence="1">
    <location>
        <position position="90"/>
    </location>
    <ligand>
        <name>Fe cation</name>
        <dbReference type="ChEBI" id="CHEBI:24875"/>
        <label>1</label>
    </ligand>
</feature>
<feature type="binding site" evidence="1">
    <location>
        <position position="90"/>
    </location>
    <ligand>
        <name>Fe cation</name>
        <dbReference type="ChEBI" id="CHEBI:24875"/>
        <label>2</label>
    </ligand>
</feature>
<feature type="binding site" evidence="1">
    <location>
        <position position="93"/>
    </location>
    <ligand>
        <name>Fe cation</name>
        <dbReference type="ChEBI" id="CHEBI:24875"/>
        <label>1</label>
    </ligand>
</feature>
<feature type="binding site" evidence="1">
    <location>
        <position position="142"/>
    </location>
    <ligand>
        <name>Fe cation</name>
        <dbReference type="ChEBI" id="CHEBI:24875"/>
        <label>2</label>
    </ligand>
</feature>
<feature type="binding site" evidence="1">
    <location>
        <position position="174"/>
    </location>
    <ligand>
        <name>Fe cation</name>
        <dbReference type="ChEBI" id="CHEBI:24875"/>
        <label>1</label>
    </ligand>
</feature>
<feature type="binding site" evidence="1">
    <location>
        <position position="174"/>
    </location>
    <ligand>
        <name>Fe cation</name>
        <dbReference type="ChEBI" id="CHEBI:24875"/>
        <label>2</label>
    </ligand>
</feature>
<feature type="binding site" evidence="1">
    <location>
        <position position="177"/>
    </location>
    <ligand>
        <name>Fe cation</name>
        <dbReference type="ChEBI" id="CHEBI:24875"/>
        <label>2</label>
    </ligand>
</feature>
<comment type="function">
    <text evidence="1">Catalyzes the hydroxylation of 2-nonaprenyl-3-methyl-6-methoxy-1,4-benzoquinol during ubiquinone biosynthesis.</text>
</comment>
<comment type="catalytic activity">
    <reaction evidence="1">
        <text>a 5-methoxy-2-methyl-3-(all-trans-polyprenyl)benzene-1,4-diol + AH2 + O2 = a 3-demethylubiquinol + A + H2O</text>
        <dbReference type="Rhea" id="RHEA:50908"/>
        <dbReference type="Rhea" id="RHEA-COMP:10859"/>
        <dbReference type="Rhea" id="RHEA-COMP:10914"/>
        <dbReference type="ChEBI" id="CHEBI:13193"/>
        <dbReference type="ChEBI" id="CHEBI:15377"/>
        <dbReference type="ChEBI" id="CHEBI:15379"/>
        <dbReference type="ChEBI" id="CHEBI:17499"/>
        <dbReference type="ChEBI" id="CHEBI:84167"/>
        <dbReference type="ChEBI" id="CHEBI:84422"/>
        <dbReference type="EC" id="1.14.99.60"/>
    </reaction>
</comment>
<comment type="cofactor">
    <cofactor evidence="1">
        <name>Fe cation</name>
        <dbReference type="ChEBI" id="CHEBI:24875"/>
    </cofactor>
    <text evidence="1">Binds 2 iron ions per subunit.</text>
</comment>
<comment type="pathway">
    <text evidence="1">Cofactor biosynthesis; ubiquinone biosynthesis.</text>
</comment>
<comment type="subcellular location">
    <subcellularLocation>
        <location evidence="1">Cell membrane</location>
        <topology evidence="1">Peripheral membrane protein</topology>
    </subcellularLocation>
</comment>
<comment type="similarity">
    <text evidence="1">Belongs to the COQ7 family.</text>
</comment>
<name>COQ7_FRATM</name>
<evidence type="ECO:0000255" key="1">
    <source>
        <dbReference type="HAMAP-Rule" id="MF_01658"/>
    </source>
</evidence>
<proteinExistence type="inferred from homology"/>
<keyword id="KW-1003">Cell membrane</keyword>
<keyword id="KW-0408">Iron</keyword>
<keyword id="KW-0472">Membrane</keyword>
<keyword id="KW-0479">Metal-binding</keyword>
<keyword id="KW-0503">Monooxygenase</keyword>
<keyword id="KW-0560">Oxidoreductase</keyword>
<keyword id="KW-0831">Ubiquinone biosynthesis</keyword>
<reference key="1">
    <citation type="journal article" date="2009" name="PLoS Pathog.">
        <title>Molecular evolutionary consequences of niche restriction in Francisella tularensis, a facultative intracellular pathogen.</title>
        <authorList>
            <person name="Larsson P."/>
            <person name="Elfsmark D."/>
            <person name="Svensson K."/>
            <person name="Wikstroem P."/>
            <person name="Forsman M."/>
            <person name="Brettin T."/>
            <person name="Keim P."/>
            <person name="Johansson A."/>
        </authorList>
    </citation>
    <scope>NUCLEOTIDE SEQUENCE [LARGE SCALE GENOMIC DNA]</scope>
    <source>
        <strain>FSC147</strain>
    </source>
</reference>
<organism>
    <name type="scientific">Francisella tularensis subsp. mediasiatica (strain FSC147)</name>
    <dbReference type="NCBI Taxonomy" id="441952"/>
    <lineage>
        <taxon>Bacteria</taxon>
        <taxon>Pseudomonadati</taxon>
        <taxon>Pseudomonadota</taxon>
        <taxon>Gammaproteobacteria</taxon>
        <taxon>Thiotrichales</taxon>
        <taxon>Francisellaceae</taxon>
        <taxon>Francisella</taxon>
    </lineage>
</organism>
<gene>
    <name evidence="1" type="primary">coq7</name>
    <name type="ordered locus">FTM_1147</name>
</gene>
<dbReference type="EC" id="1.14.99.60" evidence="1"/>
<dbReference type="EMBL" id="CP000915">
    <property type="protein sequence ID" value="ACD31035.1"/>
    <property type="molecule type" value="Genomic_DNA"/>
</dbReference>
<dbReference type="SMR" id="B2SH27"/>
<dbReference type="KEGG" id="ftm:FTM_1147"/>
<dbReference type="HOGENOM" id="CLU_088601_0_0_6"/>
<dbReference type="UniPathway" id="UPA00232"/>
<dbReference type="GO" id="GO:0005886">
    <property type="term" value="C:plasma membrane"/>
    <property type="evidence" value="ECO:0007669"/>
    <property type="project" value="UniProtKB-SubCell"/>
</dbReference>
<dbReference type="GO" id="GO:0008682">
    <property type="term" value="F:3-demethoxyubiquinol 3-hydroxylase activity"/>
    <property type="evidence" value="ECO:0007669"/>
    <property type="project" value="UniProtKB-EC"/>
</dbReference>
<dbReference type="GO" id="GO:0046872">
    <property type="term" value="F:metal ion binding"/>
    <property type="evidence" value="ECO:0007669"/>
    <property type="project" value="UniProtKB-KW"/>
</dbReference>
<dbReference type="GO" id="GO:0006744">
    <property type="term" value="P:ubiquinone biosynthetic process"/>
    <property type="evidence" value="ECO:0007669"/>
    <property type="project" value="UniProtKB-UniRule"/>
</dbReference>
<dbReference type="CDD" id="cd01042">
    <property type="entry name" value="DMQH"/>
    <property type="match status" value="1"/>
</dbReference>
<dbReference type="Gene3D" id="1.20.1260.10">
    <property type="match status" value="1"/>
</dbReference>
<dbReference type="HAMAP" id="MF_01658">
    <property type="entry name" value="COQ7"/>
    <property type="match status" value="1"/>
</dbReference>
<dbReference type="InterPro" id="IPR047809">
    <property type="entry name" value="COQ7_proteobact"/>
</dbReference>
<dbReference type="InterPro" id="IPR012347">
    <property type="entry name" value="Ferritin-like"/>
</dbReference>
<dbReference type="InterPro" id="IPR009078">
    <property type="entry name" value="Ferritin-like_SF"/>
</dbReference>
<dbReference type="InterPro" id="IPR011566">
    <property type="entry name" value="Ubq_synth_Coq7"/>
</dbReference>
<dbReference type="NCBIfam" id="NF033656">
    <property type="entry name" value="DMQ_monoox_COQ7"/>
    <property type="match status" value="1"/>
</dbReference>
<dbReference type="PANTHER" id="PTHR11237:SF4">
    <property type="entry name" value="5-DEMETHOXYUBIQUINONE HYDROXYLASE, MITOCHONDRIAL"/>
    <property type="match status" value="1"/>
</dbReference>
<dbReference type="PANTHER" id="PTHR11237">
    <property type="entry name" value="COENZYME Q10 BIOSYNTHESIS PROTEIN 7"/>
    <property type="match status" value="1"/>
</dbReference>
<dbReference type="Pfam" id="PF03232">
    <property type="entry name" value="COQ7"/>
    <property type="match status" value="1"/>
</dbReference>
<dbReference type="SUPFAM" id="SSF47240">
    <property type="entry name" value="Ferritin-like"/>
    <property type="match status" value="1"/>
</dbReference>